<reference key="1">
    <citation type="journal article" date="2000" name="Nature">
        <title>DNA sequence of both chromosomes of the cholera pathogen Vibrio cholerae.</title>
        <authorList>
            <person name="Heidelberg J.F."/>
            <person name="Eisen J.A."/>
            <person name="Nelson W.C."/>
            <person name="Clayton R.A."/>
            <person name="Gwinn M.L."/>
            <person name="Dodson R.J."/>
            <person name="Haft D.H."/>
            <person name="Hickey E.K."/>
            <person name="Peterson J.D."/>
            <person name="Umayam L.A."/>
            <person name="Gill S.R."/>
            <person name="Nelson K.E."/>
            <person name="Read T.D."/>
            <person name="Tettelin H."/>
            <person name="Richardson D.L."/>
            <person name="Ermolaeva M.D."/>
            <person name="Vamathevan J.J."/>
            <person name="Bass S."/>
            <person name="Qin H."/>
            <person name="Dragoi I."/>
            <person name="Sellers P."/>
            <person name="McDonald L.A."/>
            <person name="Utterback T.R."/>
            <person name="Fleischmann R.D."/>
            <person name="Nierman W.C."/>
            <person name="White O."/>
            <person name="Salzberg S.L."/>
            <person name="Smith H.O."/>
            <person name="Colwell R.R."/>
            <person name="Mekalanos J.J."/>
            <person name="Venter J.C."/>
            <person name="Fraser C.M."/>
        </authorList>
    </citation>
    <scope>NUCLEOTIDE SEQUENCE [LARGE SCALE GENOMIC DNA]</scope>
    <source>
        <strain>ATCC 39315 / El Tor Inaba N16961</strain>
    </source>
</reference>
<gene>
    <name type="primary">padC</name>
    <name type="ordered locus">VC_2240</name>
</gene>
<evidence type="ECO:0000250" key="1"/>
<evidence type="ECO:0000305" key="2"/>
<protein>
    <recommendedName>
        <fullName>Probable phenolic acid decarboxylase</fullName>
        <shortName>PAD</shortName>
        <ecNumber>4.1.1.-</ecNumber>
    </recommendedName>
</protein>
<sequence length="174" mass="19933">MRFERNDLSGFLGKSFIYNYDQGWRYELYVKNATTIDYRVHSGIVGGRWVKDQTVHISRVGAAIYRVSWAEPTGTSVALTLNLEDYVVHGAIYFPRWIVDEPEKIACYQNDHLPLMEAYRDAGPIYPTHVIDSFATLIYMRDCGLNNEQVINCPPSELAEDYPFCLADKNLLPA</sequence>
<keyword id="KW-0210">Decarboxylase</keyword>
<keyword id="KW-0456">Lyase</keyword>
<keyword id="KW-1185">Reference proteome</keyword>
<organism>
    <name type="scientific">Vibrio cholerae serotype O1 (strain ATCC 39315 / El Tor Inaba N16961)</name>
    <dbReference type="NCBI Taxonomy" id="243277"/>
    <lineage>
        <taxon>Bacteria</taxon>
        <taxon>Pseudomonadati</taxon>
        <taxon>Pseudomonadota</taxon>
        <taxon>Gammaproteobacteria</taxon>
        <taxon>Vibrionales</taxon>
        <taxon>Vibrionaceae</taxon>
        <taxon>Vibrio</taxon>
    </lineage>
</organism>
<comment type="function">
    <text evidence="1">Catalyzes the decarboxylation of phenolic acids.</text>
</comment>
<comment type="similarity">
    <text evidence="2">Belongs to the PadC family.</text>
</comment>
<proteinExistence type="inferred from homology"/>
<dbReference type="EC" id="4.1.1.-"/>
<dbReference type="EMBL" id="AE003852">
    <property type="protein sequence ID" value="AAF95384.1"/>
    <property type="molecule type" value="Genomic_DNA"/>
</dbReference>
<dbReference type="PIR" id="B82100">
    <property type="entry name" value="B82100"/>
</dbReference>
<dbReference type="RefSeq" id="NP_231871.1">
    <property type="nucleotide sequence ID" value="NC_002505.1"/>
</dbReference>
<dbReference type="RefSeq" id="WP_001210057.1">
    <property type="nucleotide sequence ID" value="NZ_LT906614.1"/>
</dbReference>
<dbReference type="SMR" id="Q9KPX2"/>
<dbReference type="STRING" id="243277.VC_2240"/>
<dbReference type="DNASU" id="2613162"/>
<dbReference type="EnsemblBacteria" id="AAF95384">
    <property type="protein sequence ID" value="AAF95384"/>
    <property type="gene ID" value="VC_2240"/>
</dbReference>
<dbReference type="KEGG" id="vch:VC_2240"/>
<dbReference type="PATRIC" id="fig|243277.26.peg.2137"/>
<dbReference type="eggNOG" id="COG3479">
    <property type="taxonomic scope" value="Bacteria"/>
</dbReference>
<dbReference type="HOGENOM" id="CLU_129251_0_0_6"/>
<dbReference type="Proteomes" id="UP000000584">
    <property type="component" value="Chromosome 1"/>
</dbReference>
<dbReference type="GO" id="GO:0016831">
    <property type="term" value="F:carboxy-lyase activity"/>
    <property type="evidence" value="ECO:0007669"/>
    <property type="project" value="UniProtKB-KW"/>
</dbReference>
<dbReference type="CDD" id="cd14241">
    <property type="entry name" value="PAD"/>
    <property type="match status" value="1"/>
</dbReference>
<dbReference type="Gene3D" id="2.40.128.20">
    <property type="match status" value="1"/>
</dbReference>
<dbReference type="InterPro" id="IPR012674">
    <property type="entry name" value="Calycin"/>
</dbReference>
<dbReference type="InterPro" id="IPR008729">
    <property type="entry name" value="PA_de_COase"/>
</dbReference>
<dbReference type="PANTHER" id="PTHR40087">
    <property type="entry name" value="PHENOLIC ACID DECARBOXYLASE PADC"/>
    <property type="match status" value="1"/>
</dbReference>
<dbReference type="PANTHER" id="PTHR40087:SF1">
    <property type="entry name" value="PHENOLIC ACID DECARBOXYLASE PADC"/>
    <property type="match status" value="1"/>
</dbReference>
<dbReference type="Pfam" id="PF05870">
    <property type="entry name" value="PA_decarbox"/>
    <property type="match status" value="1"/>
</dbReference>
<dbReference type="PIRSF" id="PIRSF011561">
    <property type="entry name" value="PAD"/>
    <property type="match status" value="1"/>
</dbReference>
<dbReference type="SUPFAM" id="SSF50814">
    <property type="entry name" value="Lipocalins"/>
    <property type="match status" value="1"/>
</dbReference>
<feature type="chain" id="PRO_0000108126" description="Probable phenolic acid decarboxylase">
    <location>
        <begin position="1"/>
        <end position="174"/>
    </location>
</feature>
<name>PADC_VIBCH</name>
<accession>Q9KPX2</accession>